<accession>Q3AAM1</accession>
<proteinExistence type="inferred from homology"/>
<sequence>MNRHTARELAFKALFGLDFAPEKTLDTLESLWAEKIAEGKIPPEKLVDFSRELVRGVIEKKERLDEIIRRRAIGWDFKRLAKVDKTLLRLALYEMLYRPDIDIPVSIDEAVELAKVYGEEESPKFINGILGYVAEHIDEFWEES</sequence>
<comment type="function">
    <text evidence="1">Involved in transcription antitermination. Required for transcription of ribosomal RNA (rRNA) genes. Binds specifically to the boxA antiterminator sequence of the ribosomal RNA (rrn) operons.</text>
</comment>
<comment type="similarity">
    <text evidence="1">Belongs to the NusB family.</text>
</comment>
<feature type="chain" id="PRO_0000265501" description="Transcription antitermination protein NusB">
    <location>
        <begin position="1"/>
        <end position="144"/>
    </location>
</feature>
<evidence type="ECO:0000255" key="1">
    <source>
        <dbReference type="HAMAP-Rule" id="MF_00073"/>
    </source>
</evidence>
<protein>
    <recommendedName>
        <fullName evidence="1">Transcription antitermination protein NusB</fullName>
    </recommendedName>
    <alternativeName>
        <fullName evidence="1">Antitermination factor NusB</fullName>
    </alternativeName>
</protein>
<keyword id="KW-1185">Reference proteome</keyword>
<keyword id="KW-0694">RNA-binding</keyword>
<keyword id="KW-0804">Transcription</keyword>
<keyword id="KW-0889">Transcription antitermination</keyword>
<keyword id="KW-0805">Transcription regulation</keyword>
<dbReference type="EMBL" id="CP000141">
    <property type="protein sequence ID" value="ABB15975.1"/>
    <property type="molecule type" value="Genomic_DNA"/>
</dbReference>
<dbReference type="RefSeq" id="WP_011344886.1">
    <property type="nucleotide sequence ID" value="NC_007503.1"/>
</dbReference>
<dbReference type="SMR" id="Q3AAM1"/>
<dbReference type="FunCoup" id="Q3AAM1">
    <property type="interactions" value="295"/>
</dbReference>
<dbReference type="STRING" id="246194.CHY_1994"/>
<dbReference type="KEGG" id="chy:CHY_1994"/>
<dbReference type="eggNOG" id="COG0781">
    <property type="taxonomic scope" value="Bacteria"/>
</dbReference>
<dbReference type="HOGENOM" id="CLU_087843_3_3_9"/>
<dbReference type="InParanoid" id="Q3AAM1"/>
<dbReference type="Proteomes" id="UP000002706">
    <property type="component" value="Chromosome"/>
</dbReference>
<dbReference type="GO" id="GO:0005829">
    <property type="term" value="C:cytosol"/>
    <property type="evidence" value="ECO:0007669"/>
    <property type="project" value="TreeGrafter"/>
</dbReference>
<dbReference type="GO" id="GO:0003723">
    <property type="term" value="F:RNA binding"/>
    <property type="evidence" value="ECO:0007669"/>
    <property type="project" value="UniProtKB-UniRule"/>
</dbReference>
<dbReference type="GO" id="GO:0006353">
    <property type="term" value="P:DNA-templated transcription termination"/>
    <property type="evidence" value="ECO:0007669"/>
    <property type="project" value="UniProtKB-UniRule"/>
</dbReference>
<dbReference type="GO" id="GO:0031564">
    <property type="term" value="P:transcription antitermination"/>
    <property type="evidence" value="ECO:0007669"/>
    <property type="project" value="UniProtKB-KW"/>
</dbReference>
<dbReference type="CDD" id="cd00619">
    <property type="entry name" value="Terminator_NusB"/>
    <property type="match status" value="1"/>
</dbReference>
<dbReference type="Gene3D" id="1.10.940.10">
    <property type="entry name" value="NusB-like"/>
    <property type="match status" value="1"/>
</dbReference>
<dbReference type="HAMAP" id="MF_00073">
    <property type="entry name" value="NusB"/>
    <property type="match status" value="1"/>
</dbReference>
<dbReference type="InterPro" id="IPR035926">
    <property type="entry name" value="NusB-like_sf"/>
</dbReference>
<dbReference type="InterPro" id="IPR011605">
    <property type="entry name" value="NusB_fam"/>
</dbReference>
<dbReference type="InterPro" id="IPR006027">
    <property type="entry name" value="NusB_RsmB_TIM44"/>
</dbReference>
<dbReference type="NCBIfam" id="TIGR01951">
    <property type="entry name" value="nusB"/>
    <property type="match status" value="1"/>
</dbReference>
<dbReference type="PANTHER" id="PTHR11078:SF3">
    <property type="entry name" value="ANTITERMINATION NUSB DOMAIN-CONTAINING PROTEIN"/>
    <property type="match status" value="1"/>
</dbReference>
<dbReference type="PANTHER" id="PTHR11078">
    <property type="entry name" value="N UTILIZATION SUBSTANCE PROTEIN B-RELATED"/>
    <property type="match status" value="1"/>
</dbReference>
<dbReference type="Pfam" id="PF01029">
    <property type="entry name" value="NusB"/>
    <property type="match status" value="1"/>
</dbReference>
<dbReference type="SUPFAM" id="SSF48013">
    <property type="entry name" value="NusB-like"/>
    <property type="match status" value="1"/>
</dbReference>
<reference key="1">
    <citation type="journal article" date="2005" name="PLoS Genet.">
        <title>Life in hot carbon monoxide: the complete genome sequence of Carboxydothermus hydrogenoformans Z-2901.</title>
        <authorList>
            <person name="Wu M."/>
            <person name="Ren Q."/>
            <person name="Durkin A.S."/>
            <person name="Daugherty S.C."/>
            <person name="Brinkac L.M."/>
            <person name="Dodson R.J."/>
            <person name="Madupu R."/>
            <person name="Sullivan S.A."/>
            <person name="Kolonay J.F."/>
            <person name="Nelson W.C."/>
            <person name="Tallon L.J."/>
            <person name="Jones K.M."/>
            <person name="Ulrich L.E."/>
            <person name="Gonzalez J.M."/>
            <person name="Zhulin I.B."/>
            <person name="Robb F.T."/>
            <person name="Eisen J.A."/>
        </authorList>
    </citation>
    <scope>NUCLEOTIDE SEQUENCE [LARGE SCALE GENOMIC DNA]</scope>
    <source>
        <strain>ATCC BAA-161 / DSM 6008 / Z-2901</strain>
    </source>
</reference>
<gene>
    <name evidence="1" type="primary">nusB</name>
    <name type="ordered locus">CHY_1994</name>
</gene>
<organism>
    <name type="scientific">Carboxydothermus hydrogenoformans (strain ATCC BAA-161 / DSM 6008 / Z-2901)</name>
    <dbReference type="NCBI Taxonomy" id="246194"/>
    <lineage>
        <taxon>Bacteria</taxon>
        <taxon>Bacillati</taxon>
        <taxon>Bacillota</taxon>
        <taxon>Clostridia</taxon>
        <taxon>Thermoanaerobacterales</taxon>
        <taxon>Thermoanaerobacteraceae</taxon>
        <taxon>Carboxydothermus</taxon>
    </lineage>
</organism>
<name>NUSB_CARHZ</name>